<proteinExistence type="inferred from homology"/>
<accession>Q1MS17</accession>
<organism>
    <name type="scientific">Lawsonia intracellularis (strain PHE/MN1-00)</name>
    <dbReference type="NCBI Taxonomy" id="363253"/>
    <lineage>
        <taxon>Bacteria</taxon>
        <taxon>Pseudomonadati</taxon>
        <taxon>Thermodesulfobacteriota</taxon>
        <taxon>Desulfovibrionia</taxon>
        <taxon>Desulfovibrionales</taxon>
        <taxon>Desulfovibrionaceae</taxon>
        <taxon>Lawsonia</taxon>
    </lineage>
</organism>
<protein>
    <recommendedName>
        <fullName evidence="1">Leucine--tRNA ligase</fullName>
        <ecNumber evidence="1">6.1.1.4</ecNumber>
    </recommendedName>
    <alternativeName>
        <fullName evidence="1">Leucyl-tRNA synthetase</fullName>
        <shortName evidence="1">LeuRS</shortName>
    </alternativeName>
</protein>
<reference key="1">
    <citation type="submission" date="2005-11" db="EMBL/GenBank/DDBJ databases">
        <title>The complete genome sequence of Lawsonia intracellularis: the causative agent of proliferative enteropathy.</title>
        <authorList>
            <person name="Kaur K."/>
            <person name="Zhang Q."/>
            <person name="Beckler D."/>
            <person name="Munir S."/>
            <person name="Li L."/>
            <person name="Kinsley K."/>
            <person name="Herron L."/>
            <person name="Peterson A."/>
            <person name="May B."/>
            <person name="Singh S."/>
            <person name="Gebhart C."/>
            <person name="Kapur V."/>
        </authorList>
    </citation>
    <scope>NUCLEOTIDE SEQUENCE [LARGE SCALE GENOMIC DNA]</scope>
    <source>
        <strain>PHE/MN1-00</strain>
    </source>
</reference>
<feature type="chain" id="PRO_0000334768" description="Leucine--tRNA ligase">
    <location>
        <begin position="1"/>
        <end position="835"/>
    </location>
</feature>
<feature type="short sequence motif" description="'HIGH' region">
    <location>
        <begin position="44"/>
        <end position="54"/>
    </location>
</feature>
<feature type="short sequence motif" description="'KMSKS' region">
    <location>
        <begin position="587"/>
        <end position="591"/>
    </location>
</feature>
<feature type="binding site" evidence="1">
    <location>
        <position position="590"/>
    </location>
    <ligand>
        <name>ATP</name>
        <dbReference type="ChEBI" id="CHEBI:30616"/>
    </ligand>
</feature>
<name>SYL_LAWIP</name>
<keyword id="KW-0030">Aminoacyl-tRNA synthetase</keyword>
<keyword id="KW-0067">ATP-binding</keyword>
<keyword id="KW-0963">Cytoplasm</keyword>
<keyword id="KW-0436">Ligase</keyword>
<keyword id="KW-0547">Nucleotide-binding</keyword>
<keyword id="KW-0648">Protein biosynthesis</keyword>
<keyword id="KW-1185">Reference proteome</keyword>
<dbReference type="EC" id="6.1.1.4" evidence="1"/>
<dbReference type="EMBL" id="AM180252">
    <property type="protein sequence ID" value="CAJ54208.1"/>
    <property type="molecule type" value="Genomic_DNA"/>
</dbReference>
<dbReference type="RefSeq" id="WP_011526235.1">
    <property type="nucleotide sequence ID" value="NC_008011.1"/>
</dbReference>
<dbReference type="SMR" id="Q1MS17"/>
<dbReference type="STRING" id="363253.LI0152"/>
<dbReference type="KEGG" id="lip:LI0152"/>
<dbReference type="eggNOG" id="COG0495">
    <property type="taxonomic scope" value="Bacteria"/>
</dbReference>
<dbReference type="HOGENOM" id="CLU_004427_0_0_7"/>
<dbReference type="OrthoDB" id="9810365at2"/>
<dbReference type="Proteomes" id="UP000002430">
    <property type="component" value="Chromosome"/>
</dbReference>
<dbReference type="GO" id="GO:0005829">
    <property type="term" value="C:cytosol"/>
    <property type="evidence" value="ECO:0007669"/>
    <property type="project" value="TreeGrafter"/>
</dbReference>
<dbReference type="GO" id="GO:0002161">
    <property type="term" value="F:aminoacyl-tRNA deacylase activity"/>
    <property type="evidence" value="ECO:0007669"/>
    <property type="project" value="InterPro"/>
</dbReference>
<dbReference type="GO" id="GO:0005524">
    <property type="term" value="F:ATP binding"/>
    <property type="evidence" value="ECO:0007669"/>
    <property type="project" value="UniProtKB-UniRule"/>
</dbReference>
<dbReference type="GO" id="GO:0004823">
    <property type="term" value="F:leucine-tRNA ligase activity"/>
    <property type="evidence" value="ECO:0007669"/>
    <property type="project" value="UniProtKB-UniRule"/>
</dbReference>
<dbReference type="GO" id="GO:0006429">
    <property type="term" value="P:leucyl-tRNA aminoacylation"/>
    <property type="evidence" value="ECO:0007669"/>
    <property type="project" value="UniProtKB-UniRule"/>
</dbReference>
<dbReference type="CDD" id="cd07958">
    <property type="entry name" value="Anticodon_Ia_Leu_BEm"/>
    <property type="match status" value="1"/>
</dbReference>
<dbReference type="CDD" id="cd00812">
    <property type="entry name" value="LeuRS_core"/>
    <property type="match status" value="1"/>
</dbReference>
<dbReference type="FunFam" id="3.10.20.590:FF:000001">
    <property type="entry name" value="Leucine--tRNA ligase"/>
    <property type="match status" value="1"/>
</dbReference>
<dbReference type="FunFam" id="3.40.50.620:FF:000003">
    <property type="entry name" value="Leucine--tRNA ligase"/>
    <property type="match status" value="1"/>
</dbReference>
<dbReference type="FunFam" id="1.10.730.10:FF:000011">
    <property type="entry name" value="Leucine--tRNA ligase chloroplastic/mitochondrial"/>
    <property type="match status" value="1"/>
</dbReference>
<dbReference type="FunFam" id="3.40.50.620:FF:000100">
    <property type="entry name" value="probable leucine--tRNA ligase, mitochondrial"/>
    <property type="match status" value="1"/>
</dbReference>
<dbReference type="Gene3D" id="3.10.20.590">
    <property type="match status" value="1"/>
</dbReference>
<dbReference type="Gene3D" id="3.40.50.620">
    <property type="entry name" value="HUPs"/>
    <property type="match status" value="2"/>
</dbReference>
<dbReference type="Gene3D" id="1.10.730.10">
    <property type="entry name" value="Isoleucyl-tRNA Synthetase, Domain 1"/>
    <property type="match status" value="1"/>
</dbReference>
<dbReference type="HAMAP" id="MF_00049_B">
    <property type="entry name" value="Leu_tRNA_synth_B"/>
    <property type="match status" value="1"/>
</dbReference>
<dbReference type="InterPro" id="IPR001412">
    <property type="entry name" value="aa-tRNA-synth_I_CS"/>
</dbReference>
<dbReference type="InterPro" id="IPR002300">
    <property type="entry name" value="aa-tRNA-synth_Ia"/>
</dbReference>
<dbReference type="InterPro" id="IPR002302">
    <property type="entry name" value="Leu-tRNA-ligase"/>
</dbReference>
<dbReference type="InterPro" id="IPR025709">
    <property type="entry name" value="Leu_tRNA-synth_edit"/>
</dbReference>
<dbReference type="InterPro" id="IPR013155">
    <property type="entry name" value="M/V/L/I-tRNA-synth_anticd-bd"/>
</dbReference>
<dbReference type="InterPro" id="IPR015413">
    <property type="entry name" value="Methionyl/Leucyl_tRNA_Synth"/>
</dbReference>
<dbReference type="InterPro" id="IPR014729">
    <property type="entry name" value="Rossmann-like_a/b/a_fold"/>
</dbReference>
<dbReference type="InterPro" id="IPR009080">
    <property type="entry name" value="tRNAsynth_Ia_anticodon-bd"/>
</dbReference>
<dbReference type="InterPro" id="IPR009008">
    <property type="entry name" value="Val/Leu/Ile-tRNA-synth_edit"/>
</dbReference>
<dbReference type="NCBIfam" id="TIGR00396">
    <property type="entry name" value="leuS_bact"/>
    <property type="match status" value="1"/>
</dbReference>
<dbReference type="PANTHER" id="PTHR43740:SF2">
    <property type="entry name" value="LEUCINE--TRNA LIGASE, MITOCHONDRIAL"/>
    <property type="match status" value="1"/>
</dbReference>
<dbReference type="PANTHER" id="PTHR43740">
    <property type="entry name" value="LEUCYL-TRNA SYNTHETASE"/>
    <property type="match status" value="1"/>
</dbReference>
<dbReference type="Pfam" id="PF08264">
    <property type="entry name" value="Anticodon_1"/>
    <property type="match status" value="1"/>
</dbReference>
<dbReference type="Pfam" id="PF00133">
    <property type="entry name" value="tRNA-synt_1"/>
    <property type="match status" value="1"/>
</dbReference>
<dbReference type="Pfam" id="PF13603">
    <property type="entry name" value="tRNA-synt_1_2"/>
    <property type="match status" value="1"/>
</dbReference>
<dbReference type="Pfam" id="PF09334">
    <property type="entry name" value="tRNA-synt_1g"/>
    <property type="match status" value="1"/>
</dbReference>
<dbReference type="PRINTS" id="PR00985">
    <property type="entry name" value="TRNASYNTHLEU"/>
</dbReference>
<dbReference type="SUPFAM" id="SSF47323">
    <property type="entry name" value="Anticodon-binding domain of a subclass of class I aminoacyl-tRNA synthetases"/>
    <property type="match status" value="1"/>
</dbReference>
<dbReference type="SUPFAM" id="SSF52374">
    <property type="entry name" value="Nucleotidylyl transferase"/>
    <property type="match status" value="1"/>
</dbReference>
<dbReference type="SUPFAM" id="SSF50677">
    <property type="entry name" value="ValRS/IleRS/LeuRS editing domain"/>
    <property type="match status" value="1"/>
</dbReference>
<dbReference type="PROSITE" id="PS00178">
    <property type="entry name" value="AA_TRNA_LIGASE_I"/>
    <property type="match status" value="1"/>
</dbReference>
<gene>
    <name evidence="1" type="primary">leuS</name>
    <name type="ordered locus">LI0152</name>
</gene>
<comment type="catalytic activity">
    <reaction evidence="1">
        <text>tRNA(Leu) + L-leucine + ATP = L-leucyl-tRNA(Leu) + AMP + diphosphate</text>
        <dbReference type="Rhea" id="RHEA:11688"/>
        <dbReference type="Rhea" id="RHEA-COMP:9613"/>
        <dbReference type="Rhea" id="RHEA-COMP:9622"/>
        <dbReference type="ChEBI" id="CHEBI:30616"/>
        <dbReference type="ChEBI" id="CHEBI:33019"/>
        <dbReference type="ChEBI" id="CHEBI:57427"/>
        <dbReference type="ChEBI" id="CHEBI:78442"/>
        <dbReference type="ChEBI" id="CHEBI:78494"/>
        <dbReference type="ChEBI" id="CHEBI:456215"/>
        <dbReference type="EC" id="6.1.1.4"/>
    </reaction>
</comment>
<comment type="subcellular location">
    <subcellularLocation>
        <location evidence="1">Cytoplasm</location>
    </subcellularLocation>
</comment>
<comment type="similarity">
    <text evidence="1">Belongs to the class-I aminoacyl-tRNA synthetase family.</text>
</comment>
<evidence type="ECO:0000255" key="1">
    <source>
        <dbReference type="HAMAP-Rule" id="MF_00049"/>
    </source>
</evidence>
<sequence length="835" mass="96315">MIMHSNYDPNIIEKKWQRYWEEQHAYACDIDPNKKKYYVLEMWPYPSGNIHMGHVRNYSIGDVIARIKRMQGYNVLHPMGWDAFGLPAELAAIKHHTQPADWTYTNINEMRAQLKRLGYSYDWQREIATCDPDYYQWEQLFFVDCFEKGLVYRKKAPQNWCPSCNTVLANEQVIEGSCWRCDTSIIQKELTQWFLKITDYAEELLDDLTTLKYSWPDRVITMQENWLGKSTGVEISFPIESSQDFITIFTTRPDTIFGATAIILAPEHPILETLLNDTPQKEKLYNVIEKMRNMDRLERQSNLLTKEGIFIDRYCINPCSGDKIPIWIGNFVLADYGTGAIMAVPAHDQRDFDFCKKYNLPISIVIQPDELQINEHTIVEPWTGLGTLIHSGQFTGLTNKEAKEKITQYLEKIGKATRVVSWRLRDWNISRQRYWGTPIPIIYCKNCGVVSVPKNELPVILPTNITINEDGSSPLPQESSFIDCMCPQCGGIAKRETDTMDTFVDSSWYFARFVDPKNTKQPFDTSIAKYWLNVDQYIGGVEHAILHLLYSRFFTKLLRDLGYLPSNINEPFAKLLTQGMVIKDGSKMSKSKGNIVDPNQMINIYGADTIRLFCLFAAPPERDFDWSDSGIEGSYRFLHRVWRLFIDVQPHIHTTHAGNSTVIETTTALTKDVKRKEHITIKKVSEDIENKYQFNTAIASIMEFVNTLYLSKNELILTVEGKNILSSAIATVLTLLSPMTPHICEELWSYLGHSTSISLEPWPKWDPQALLKDVVTIVVQINGKVRNKFEVPMDLSKEELEHIIFNDTKITQYLEGKTIQKHIIIPNKIINIVTT</sequence>